<comment type="function">
    <text evidence="1">Allows the formation of correctly charged Asn-tRNA(Asn) or Gln-tRNA(Gln) through the transamidation of misacylated Asp-tRNA(Asn) or Glu-tRNA(Gln) in organisms which lack either or both of asparaginyl-tRNA or glutaminyl-tRNA synthetases. The reaction takes place in the presence of glutamine and ATP through an activated phospho-Asp-tRNA(Asn) or phospho-Glu-tRNA(Gln) (By similarity).</text>
</comment>
<comment type="catalytic activity">
    <reaction>
        <text>L-glutamyl-tRNA(Gln) + L-glutamine + ATP + H2O = L-glutaminyl-tRNA(Gln) + L-glutamate + ADP + phosphate + H(+)</text>
        <dbReference type="Rhea" id="RHEA:17521"/>
        <dbReference type="Rhea" id="RHEA-COMP:9681"/>
        <dbReference type="Rhea" id="RHEA-COMP:9684"/>
        <dbReference type="ChEBI" id="CHEBI:15377"/>
        <dbReference type="ChEBI" id="CHEBI:15378"/>
        <dbReference type="ChEBI" id="CHEBI:29985"/>
        <dbReference type="ChEBI" id="CHEBI:30616"/>
        <dbReference type="ChEBI" id="CHEBI:43474"/>
        <dbReference type="ChEBI" id="CHEBI:58359"/>
        <dbReference type="ChEBI" id="CHEBI:78520"/>
        <dbReference type="ChEBI" id="CHEBI:78521"/>
        <dbReference type="ChEBI" id="CHEBI:456216"/>
    </reaction>
</comment>
<comment type="catalytic activity">
    <reaction>
        <text>L-aspartyl-tRNA(Asn) + L-glutamine + ATP + H2O = L-asparaginyl-tRNA(Asn) + L-glutamate + ADP + phosphate + 2 H(+)</text>
        <dbReference type="Rhea" id="RHEA:14513"/>
        <dbReference type="Rhea" id="RHEA-COMP:9674"/>
        <dbReference type="Rhea" id="RHEA-COMP:9677"/>
        <dbReference type="ChEBI" id="CHEBI:15377"/>
        <dbReference type="ChEBI" id="CHEBI:15378"/>
        <dbReference type="ChEBI" id="CHEBI:29985"/>
        <dbReference type="ChEBI" id="CHEBI:30616"/>
        <dbReference type="ChEBI" id="CHEBI:43474"/>
        <dbReference type="ChEBI" id="CHEBI:58359"/>
        <dbReference type="ChEBI" id="CHEBI:78515"/>
        <dbReference type="ChEBI" id="CHEBI:78516"/>
        <dbReference type="ChEBI" id="CHEBI:456216"/>
    </reaction>
</comment>
<comment type="subunit">
    <text evidence="1">Heterotrimer of A, B and C subunits.</text>
</comment>
<comment type="similarity">
    <text evidence="2">Belongs to the GatC family.</text>
</comment>
<organism>
    <name type="scientific">Helicobacter pylori (strain J99 / ATCC 700824)</name>
    <name type="common">Campylobacter pylori J99</name>
    <dbReference type="NCBI Taxonomy" id="85963"/>
    <lineage>
        <taxon>Bacteria</taxon>
        <taxon>Pseudomonadati</taxon>
        <taxon>Campylobacterota</taxon>
        <taxon>Epsilonproteobacteria</taxon>
        <taxon>Campylobacterales</taxon>
        <taxon>Helicobacteraceae</taxon>
        <taxon>Helicobacter</taxon>
    </lineage>
</organism>
<protein>
    <recommendedName>
        <fullName>Glutamyl-tRNA(Gln) amidotransferase subunit C</fullName>
        <shortName>Glu-ADT subunit C</shortName>
        <ecNumber>6.3.5.-</ecNumber>
    </recommendedName>
</protein>
<keyword id="KW-0067">ATP-binding</keyword>
<keyword id="KW-0436">Ligase</keyword>
<keyword id="KW-0547">Nucleotide-binding</keyword>
<keyword id="KW-0648">Protein biosynthesis</keyword>
<proteinExistence type="inferred from homology"/>
<evidence type="ECO:0000250" key="1"/>
<evidence type="ECO:0000305" key="2"/>
<feature type="chain" id="PRO_0000105302" description="Glutamyl-tRNA(Gln) amidotransferase subunit C">
    <location>
        <begin position="1"/>
        <end position="93"/>
    </location>
</feature>
<accession>Q9ZKM6</accession>
<dbReference type="EC" id="6.3.5.-"/>
<dbReference type="EMBL" id="AE001439">
    <property type="protein sequence ID" value="AAD06491.1"/>
    <property type="molecule type" value="Genomic_DNA"/>
</dbReference>
<dbReference type="PIR" id="H71872">
    <property type="entry name" value="H71872"/>
</dbReference>
<dbReference type="RefSeq" id="WP_001165203.1">
    <property type="nucleotide sequence ID" value="NZ_CP011330.1"/>
</dbReference>
<dbReference type="SMR" id="Q9ZKM6"/>
<dbReference type="DNASU" id="889551"/>
<dbReference type="KEGG" id="hpj:jhp_0909"/>
<dbReference type="PATRIC" id="fig|85963.30.peg.51"/>
<dbReference type="eggNOG" id="COG0721">
    <property type="taxonomic scope" value="Bacteria"/>
</dbReference>
<dbReference type="Proteomes" id="UP000000804">
    <property type="component" value="Chromosome"/>
</dbReference>
<dbReference type="GO" id="GO:0050566">
    <property type="term" value="F:asparaginyl-tRNA synthase (glutamine-hydrolyzing) activity"/>
    <property type="evidence" value="ECO:0007669"/>
    <property type="project" value="RHEA"/>
</dbReference>
<dbReference type="GO" id="GO:0005524">
    <property type="term" value="F:ATP binding"/>
    <property type="evidence" value="ECO:0007669"/>
    <property type="project" value="UniProtKB-KW"/>
</dbReference>
<dbReference type="GO" id="GO:0050567">
    <property type="term" value="F:glutaminyl-tRNA synthase (glutamine-hydrolyzing) activity"/>
    <property type="evidence" value="ECO:0007669"/>
    <property type="project" value="UniProtKB-UniRule"/>
</dbReference>
<dbReference type="GO" id="GO:0006450">
    <property type="term" value="P:regulation of translational fidelity"/>
    <property type="evidence" value="ECO:0007669"/>
    <property type="project" value="InterPro"/>
</dbReference>
<dbReference type="GO" id="GO:0006412">
    <property type="term" value="P:translation"/>
    <property type="evidence" value="ECO:0007669"/>
    <property type="project" value="UniProtKB-UniRule"/>
</dbReference>
<dbReference type="Gene3D" id="1.10.20.60">
    <property type="entry name" value="Glu-tRNAGln amidotransferase C subunit, N-terminal domain"/>
    <property type="match status" value="1"/>
</dbReference>
<dbReference type="HAMAP" id="MF_00122">
    <property type="entry name" value="GatC"/>
    <property type="match status" value="1"/>
</dbReference>
<dbReference type="InterPro" id="IPR036113">
    <property type="entry name" value="Asp/Glu-ADT_sf_sub_c"/>
</dbReference>
<dbReference type="InterPro" id="IPR003837">
    <property type="entry name" value="GatC"/>
</dbReference>
<dbReference type="NCBIfam" id="TIGR00135">
    <property type="entry name" value="gatC"/>
    <property type="match status" value="1"/>
</dbReference>
<dbReference type="Pfam" id="PF02686">
    <property type="entry name" value="GatC"/>
    <property type="match status" value="1"/>
</dbReference>
<dbReference type="SUPFAM" id="SSF141000">
    <property type="entry name" value="Glu-tRNAGln amidotransferase C subunit"/>
    <property type="match status" value="1"/>
</dbReference>
<sequence length="93" mass="10741">MQIDDALLQRLEKLSMLEIKDEHKESVKGHLAEVLGFVENIFALETNNLKTDTHLSTPLREDEPKSQPHIAKEILSQNKHSQDHYFVVPKIIE</sequence>
<reference key="1">
    <citation type="journal article" date="1999" name="Nature">
        <title>Genomic sequence comparison of two unrelated isolates of the human gastric pathogen Helicobacter pylori.</title>
        <authorList>
            <person name="Alm R.A."/>
            <person name="Ling L.-S.L."/>
            <person name="Moir D.T."/>
            <person name="King B.L."/>
            <person name="Brown E.D."/>
            <person name="Doig P.C."/>
            <person name="Smith D.R."/>
            <person name="Noonan B."/>
            <person name="Guild B.C."/>
            <person name="deJonge B.L."/>
            <person name="Carmel G."/>
            <person name="Tummino P.J."/>
            <person name="Caruso A."/>
            <person name="Uria-Nickelsen M."/>
            <person name="Mills D.M."/>
            <person name="Ives C."/>
            <person name="Gibson R."/>
            <person name="Merberg D."/>
            <person name="Mills S.D."/>
            <person name="Jiang Q."/>
            <person name="Taylor D.E."/>
            <person name="Vovis G.F."/>
            <person name="Trust T.J."/>
        </authorList>
    </citation>
    <scope>NUCLEOTIDE SEQUENCE [LARGE SCALE GENOMIC DNA]</scope>
    <source>
        <strain>J99 / ATCC 700824</strain>
    </source>
</reference>
<gene>
    <name type="primary">gatC</name>
    <name type="ordered locus">jhp_0909</name>
</gene>
<name>GATC_HELPJ</name>